<sequence>MARGMNHVYLIGALARDPELRYTGNGMAVFEATVAGEDRVIGNDGRERNLPWYHRVSILGKPAEWQAERNLKGGDAVVVEGTLEYRQWEAPEGGKRSAVNVKALRMEQLGTQPELIQDAGGGVRMSGAMNEVLVLGNVTRDPEIRYTPAGDAVLSLSIAVNENYQDRQGQRQEKVHYIDATLWRDLAENMKELRKGDPVMIMGRLVNEGWTDKDGNKRNSTRVEATRVEALARGAGNANSGYAAATPAAPRTQTASSAARPTSGGYQSQPSRAANTGSRSGGLDIDQGLDDFPPEEDDLPF</sequence>
<keyword id="KW-0002">3D-structure</keyword>
<keyword id="KW-0963">Cytoplasm</keyword>
<keyword id="KW-0227">DNA damage</keyword>
<keyword id="KW-0233">DNA recombination</keyword>
<keyword id="KW-0234">DNA repair</keyword>
<keyword id="KW-0235">DNA replication</keyword>
<keyword id="KW-0238">DNA-binding</keyword>
<keyword id="KW-1185">Reference proteome</keyword>
<keyword id="KW-0677">Repeat</keyword>
<name>SSB_DEIRA</name>
<evidence type="ECO:0000255" key="1">
    <source>
        <dbReference type="HAMAP-Rule" id="MF_00984"/>
    </source>
</evidence>
<evidence type="ECO:0000256" key="2">
    <source>
        <dbReference type="SAM" id="MobiDB-lite"/>
    </source>
</evidence>
<evidence type="ECO:0000269" key="3">
    <source>
    </source>
</evidence>
<evidence type="ECO:0000269" key="4">
    <source>
    </source>
</evidence>
<evidence type="ECO:0000269" key="5">
    <source>
    </source>
</evidence>
<evidence type="ECO:0000269" key="6">
    <source>
    </source>
</evidence>
<evidence type="ECO:0000269" key="7">
    <source>
    </source>
</evidence>
<evidence type="ECO:0000269" key="8">
    <source>
    </source>
</evidence>
<evidence type="ECO:0000269" key="9">
    <source>
    </source>
</evidence>
<evidence type="ECO:0000305" key="10"/>
<evidence type="ECO:0007829" key="11">
    <source>
        <dbReference type="PDB" id="1SE8"/>
    </source>
</evidence>
<organism>
    <name type="scientific">Deinococcus radiodurans (strain ATCC 13939 / DSM 20539 / JCM 16871 / CCUG 27074 / LMG 4051 / NBRC 15346 / NCIMB 9279 / VKM B-1422 / R1)</name>
    <dbReference type="NCBI Taxonomy" id="243230"/>
    <lineage>
        <taxon>Bacteria</taxon>
        <taxon>Thermotogati</taxon>
        <taxon>Deinococcota</taxon>
        <taxon>Deinococci</taxon>
        <taxon>Deinococcales</taxon>
        <taxon>Deinococcaceae</taxon>
        <taxon>Deinococcus</taxon>
    </lineage>
</organism>
<accession>Q9RY51</accession>
<reference key="1">
    <citation type="journal article" date="2004" name="BMC Microbiol.">
        <title>The single-stranded DNA-binding protein of Deinococcus radiodurans.</title>
        <authorList>
            <person name="Eggington J.M."/>
            <person name="Haruta N."/>
            <person name="Wood E.A."/>
            <person name="Cox M.M."/>
        </authorList>
    </citation>
    <scope>NUCLEOTIDE SEQUENCE [GENOMIC DNA]</scope>
    <scope>FUNCTION</scope>
    <scope>SUBUNIT</scope>
    <source>
        <strain>ATCC 13939 / DSM 20539 / JCM 16871 / CCUG 27074 / LMG 4051 / NBRC 15346 / NCIMB 9279 / VKM B-1422 / R1</strain>
    </source>
</reference>
<reference key="2">
    <citation type="journal article" date="2005" name="Nucleic Acids Res.">
        <title>Single-stranded DNA-binding protein of Deinococcus radiodurans: a biophysical characterization.</title>
        <authorList>
            <person name="Witte G."/>
            <person name="Urbanke C."/>
            <person name="Curth U."/>
        </authorList>
    </citation>
    <scope>NUCLEOTIDE SEQUENCE [GENOMIC DNA]</scope>
    <scope>SUBUNIT</scope>
    <scope>DNA-BINDING</scope>
    <source>
        <strain>ATCC 13939 / DSM 20539 / JCM 16871 / CCUG 27074 / LMG 4051 / NBRC 15346 / NCIMB 9279 / VKM B-1422 / R1</strain>
    </source>
</reference>
<reference key="3">
    <citation type="journal article" date="1999" name="Science">
        <title>Genome sequence of the radioresistant bacterium Deinococcus radiodurans R1.</title>
        <authorList>
            <person name="White O."/>
            <person name="Eisen J.A."/>
            <person name="Heidelberg J.F."/>
            <person name="Hickey E.K."/>
            <person name="Peterson J.D."/>
            <person name="Dodson R.J."/>
            <person name="Haft D.H."/>
            <person name="Gwinn M.L."/>
            <person name="Nelson W.C."/>
            <person name="Richardson D.L."/>
            <person name="Moffat K.S."/>
            <person name="Qin H."/>
            <person name="Jiang L."/>
            <person name="Pamphile W."/>
            <person name="Crosby M."/>
            <person name="Shen M."/>
            <person name="Vamathevan J.J."/>
            <person name="Lam P."/>
            <person name="McDonald L.A."/>
            <person name="Utterback T.R."/>
            <person name="Zalewski C."/>
            <person name="Makarova K.S."/>
            <person name="Aravind L."/>
            <person name="Daly M.J."/>
            <person name="Minton K.W."/>
            <person name="Fleischmann R.D."/>
            <person name="Ketchum K.A."/>
            <person name="Nelson K.E."/>
            <person name="Salzberg S.L."/>
            <person name="Smith H.O."/>
            <person name="Venter J.C."/>
            <person name="Fraser C.M."/>
        </authorList>
    </citation>
    <scope>NUCLEOTIDE SEQUENCE [LARGE SCALE GENOMIC DNA]</scope>
    <source>
        <strain>ATCC 13939 / DSM 20539 / JCM 16871 / CCUG 27074 / LMG 4051 / NBRC 15346 / NCIMB 9279 / VKM B-1422 / R1</strain>
    </source>
</reference>
<reference key="4">
    <citation type="journal article" date="2004" name="J. Biol. Chem.">
        <title>DNA helicase activity of the RecD protein from Deinococcus radiodurans.</title>
        <authorList>
            <person name="Wang J."/>
            <person name="Julin D.A."/>
        </authorList>
    </citation>
    <scope>FUNCTION AS AN SSB PROTEIN</scope>
    <scope>DNA-BINDING</scope>
    <source>
        <strain>ATCC 13939 / DSM 20539 / JCM 16871 / CCUG 27074 / LMG 4051 / NBRC 15346 / NCIMB 9279 / VKM B-1422 / R1</strain>
    </source>
</reference>
<reference key="5">
    <citation type="journal article" date="2010" name="DNA Repair">
        <title>DdrB stimulates single-stranded DNA annealing and facilitates RecA-independent DNA repair in Deinococcus radiodurans.</title>
        <authorList>
            <person name="Xu G."/>
            <person name="Lu H."/>
            <person name="Wang L."/>
            <person name="Chen H."/>
            <person name="Xu Z."/>
            <person name="Hu Y."/>
            <person name="Tian B."/>
            <person name="Hua Y."/>
        </authorList>
    </citation>
    <scope>FUNCTION</scope>
    <scope>INTERACTION WITH DDRB</scope>
    <source>
        <strain>ATCC 13939 / DSM 20539 / JCM 16871 / CCUG 27074 / LMG 4051 / NBRC 15346 / NCIMB 9279 / VKM B-1422 / R1</strain>
    </source>
</reference>
<reference key="6">
    <citation type="journal article" date="2013" name="PLoS ONE">
        <title>The essential role of the Deinococcus radiodurans ssb gene in cell survival and radiation tolerance.</title>
        <authorList>
            <person name="Lockhart J.S."/>
            <person name="DeVeaux L.C."/>
        </authorList>
    </citation>
    <scope>FUNCTION</scope>
    <scope>DISRUPTION PHENOTYPE</scope>
    <source>
        <strain>ATCC 13939 / DSM 20539 / JCM 16871 / CCUG 27074 / LMG 4051 / NBRC 15346 / NCIMB 9279 / VKM B-1422 / R1</strain>
    </source>
</reference>
<reference key="7">
    <citation type="journal article" date="2004" name="Proc. Natl. Acad. Sci. U.S.A.">
        <title>Crystal structure of the Deinococcus radiodurans single-stranded DNA-binding protein suggests a mechanism for coping with DNA damage.</title>
        <authorList>
            <person name="Bernstein D.A."/>
            <person name="Eggington J.M."/>
            <person name="Killoran M.P."/>
            <person name="Misic A.M."/>
            <person name="Cox M.M."/>
            <person name="Keck J.L."/>
        </authorList>
    </citation>
    <scope>X-RAY CRYSTALLOGRAPHY (1.80 ANGSTROMS)</scope>
    <scope>SUBUNIT</scope>
    <source>
        <strain>ATCC 13939 / DSM 20539 / JCM 16871 / CCUG 27074 / LMG 4051 / NBRC 15346 / NCIMB 9279 / VKM B-1422 / R1</strain>
    </source>
</reference>
<reference key="8">
    <citation type="submission" date="2011-11" db="PDB data bank">
        <title>Identification of the SSB-interaction platform of Deinococcus radiodurans uracil-DNA glycosylase.</title>
        <authorList>
            <person name="George N.P."/>
            <person name="Keck J.L."/>
        </authorList>
    </citation>
    <scope>X-RAY CRYSTALLOGRAPHY (1.95 ANGSTROMS) OF 290-301</scope>
</reference>
<reference key="9">
    <citation type="journal article" date="2012" name="J. Biol. Chem.">
        <title>Structure and cellular dynamics of Deinococcus radiodurans single-stranded DNA (ssDNA)-binding protein (SSB)-DNA complexes.</title>
        <authorList>
            <person name="George N.P."/>
            <person name="Ngo K.V."/>
            <person name="Chitteni-Pattu S."/>
            <person name="Norais C.A."/>
            <person name="Battista J.R."/>
            <person name="Cox M.M."/>
            <person name="Keck J.L."/>
        </authorList>
    </citation>
    <scope>X-RAY CRYSTALLOGRAPHY (2.40 ANGSTROMS) IN COMPLEX WITH SSDNA</scope>
    <scope>SUBUNIT</scope>
    <scope>SUBCELLULAR LOCATION</scope>
    <scope>INDUCTION</scope>
</reference>
<feature type="chain" id="PRO_0000096147" description="Single-stranded DNA-binding protein">
    <location>
        <begin position="1"/>
        <end position="301"/>
    </location>
</feature>
<feature type="domain" description="SSB 1" evidence="1">
    <location>
        <begin position="5"/>
        <end position="110"/>
    </location>
</feature>
<feature type="domain" description="SSB 2" evidence="1">
    <location>
        <begin position="129"/>
        <end position="232"/>
    </location>
</feature>
<feature type="region of interest" description="Disordered" evidence="2">
    <location>
        <begin position="238"/>
        <end position="301"/>
    </location>
</feature>
<feature type="short sequence motif" description="Important for interaction with partner proteins" evidence="1">
    <location>
        <begin position="296"/>
        <end position="301"/>
    </location>
</feature>
<feature type="compositionally biased region" description="Low complexity" evidence="2">
    <location>
        <begin position="238"/>
        <end position="260"/>
    </location>
</feature>
<feature type="compositionally biased region" description="Polar residues" evidence="2">
    <location>
        <begin position="264"/>
        <end position="278"/>
    </location>
</feature>
<feature type="compositionally biased region" description="Acidic residues" evidence="2">
    <location>
        <begin position="287"/>
        <end position="301"/>
    </location>
</feature>
<feature type="strand" evidence="11">
    <location>
        <begin position="5"/>
        <end position="16"/>
    </location>
</feature>
<feature type="strand" evidence="11">
    <location>
        <begin position="19"/>
        <end position="22"/>
    </location>
</feature>
<feature type="strand" evidence="11">
    <location>
        <begin position="28"/>
        <end position="39"/>
    </location>
</feature>
<feature type="strand" evidence="11">
    <location>
        <begin position="49"/>
        <end position="60"/>
    </location>
</feature>
<feature type="helix" evidence="11">
    <location>
        <begin position="61"/>
        <end position="68"/>
    </location>
</feature>
<feature type="strand" evidence="11">
    <location>
        <begin position="76"/>
        <end position="88"/>
    </location>
</feature>
<feature type="strand" evidence="11">
    <location>
        <begin position="96"/>
        <end position="108"/>
    </location>
</feature>
<feature type="strand" evidence="11">
    <location>
        <begin position="115"/>
        <end position="117"/>
    </location>
</feature>
<feature type="strand" evidence="11">
    <location>
        <begin position="123"/>
        <end position="126"/>
    </location>
</feature>
<feature type="strand" evidence="11">
    <location>
        <begin position="129"/>
        <end position="138"/>
    </location>
</feature>
<feature type="strand" evidence="11">
    <location>
        <begin position="143"/>
        <end position="146"/>
    </location>
</feature>
<feature type="strand" evidence="11">
    <location>
        <begin position="152"/>
        <end position="165"/>
    </location>
</feature>
<feature type="strand" evidence="11">
    <location>
        <begin position="171"/>
        <end position="183"/>
    </location>
</feature>
<feature type="helix" evidence="11">
    <location>
        <begin position="185"/>
        <end position="190"/>
    </location>
</feature>
<feature type="strand" evidence="11">
    <location>
        <begin position="198"/>
        <end position="209"/>
    </location>
</feature>
<feature type="strand" evidence="11">
    <location>
        <begin position="219"/>
        <end position="230"/>
    </location>
</feature>
<comment type="function">
    <text evidence="1 3 5 7 9">Plays an important role in DNA replication, recombination and repair. Binds to ssDNA and to an array of partner proteins to recruit them to their sites of action during DNA metabolism (By similarity). Essential for ionizing radiation resistance. Stimulates the 5'-3' DNA helicase activity of RecD-like helicase. Stimulates RecA protein-promoted DNA three-strand exchange reactions in vitro with both D.radiodurans and E.coli-derived RecA. Complements an ssb deletion in E.coli, but does not complement a ddrb disruption in D.radiodurans.</text>
</comment>
<comment type="subunit">
    <text evidence="3 4 6 7 8">Homodimer. Binds ssDNA. Interacts with DdrB.</text>
</comment>
<comment type="subcellular location">
    <subcellularLocation>
        <location evidence="8">Cytoplasm</location>
    </subcellularLocation>
    <text>During log phase, present in multiple foci. 1 hour after irradiation most foci are condensed in the center of the cell's nucleoid, they dissipate by 2 hours later.</text>
</comment>
<comment type="induction">
    <text evidence="8">Constitutively expressed, highly up-regulated following ionizing radiation for at least 12 hours (at protein level).</text>
</comment>
<comment type="disruption phenotype">
    <text evidence="9">Essential, it cannot be knocked out. As SSB levels are depleted growth slows, tolerance to ionizing radiation and UV light decreases rapidly. Cannot be complemented by ddrB.</text>
</comment>
<comment type="sequence caution" evidence="10">
    <conflict type="frameshift">
        <sequence resource="EMBL-CDS" id="AAF09692"/>
    </conflict>
</comment>
<protein>
    <recommendedName>
        <fullName evidence="1">Single-stranded DNA-binding protein</fullName>
        <shortName evidence="1">SSB</shortName>
    </recommendedName>
</protein>
<gene>
    <name type="primary">ssb</name>
    <name type="ordered locus">DR_0099</name>
</gene>
<dbReference type="EMBL" id="AY293617">
    <property type="protein sequence ID" value="AAQ18705.1"/>
    <property type="molecule type" value="Genomic_DNA"/>
</dbReference>
<dbReference type="EMBL" id="AJ564860">
    <property type="protein sequence ID" value="CAD92322.1"/>
    <property type="molecule type" value="Genomic_DNA"/>
</dbReference>
<dbReference type="EMBL" id="AE000513">
    <property type="protein sequence ID" value="AAF09692.1"/>
    <property type="status" value="ALT_FRAME"/>
    <property type="molecule type" value="Genomic_DNA"/>
</dbReference>
<dbReference type="PIR" id="A75559">
    <property type="entry name" value="A75559"/>
</dbReference>
<dbReference type="RefSeq" id="NP_293825.1">
    <property type="nucleotide sequence ID" value="NC_001263.1"/>
</dbReference>
<dbReference type="RefSeq" id="WP_027480308.1">
    <property type="nucleotide sequence ID" value="NZ_CP015081.1"/>
</dbReference>
<dbReference type="PDB" id="1SE8">
    <property type="method" value="X-ray"/>
    <property type="resolution" value="1.80 A"/>
    <property type="chains" value="A=1-301"/>
</dbReference>
<dbReference type="PDB" id="3UDG">
    <property type="method" value="X-ray"/>
    <property type="resolution" value="2.40 A"/>
    <property type="chains" value="A/B/C=1-301"/>
</dbReference>
<dbReference type="PDB" id="3UFM">
    <property type="method" value="X-ray"/>
    <property type="resolution" value="1.95 A"/>
    <property type="chains" value="B=290-301"/>
</dbReference>
<dbReference type="PDBsum" id="1SE8"/>
<dbReference type="PDBsum" id="3UDG"/>
<dbReference type="PDBsum" id="3UFM"/>
<dbReference type="SMR" id="Q9RY51"/>
<dbReference type="STRING" id="243230.DR_0099"/>
<dbReference type="PaxDb" id="243230-DR_0099"/>
<dbReference type="EnsemblBacteria" id="AAF09692">
    <property type="protein sequence ID" value="AAF09692"/>
    <property type="gene ID" value="DR_0099"/>
</dbReference>
<dbReference type="GeneID" id="69516330"/>
<dbReference type="KEGG" id="dra:DR_0099"/>
<dbReference type="PATRIC" id="fig|243230.17.peg.263"/>
<dbReference type="eggNOG" id="COG0629">
    <property type="taxonomic scope" value="Bacteria"/>
</dbReference>
<dbReference type="HOGENOM" id="CLU_1802971_0_0_0"/>
<dbReference type="InParanoid" id="Q9RY51"/>
<dbReference type="OrthoDB" id="9809878at2"/>
<dbReference type="EvolutionaryTrace" id="Q9RY51"/>
<dbReference type="Proteomes" id="UP000002524">
    <property type="component" value="Chromosome 1"/>
</dbReference>
<dbReference type="GO" id="GO:0005737">
    <property type="term" value="C:cytoplasm"/>
    <property type="evidence" value="ECO:0007669"/>
    <property type="project" value="UniProtKB-SubCell"/>
</dbReference>
<dbReference type="GO" id="GO:0009295">
    <property type="term" value="C:nucleoid"/>
    <property type="evidence" value="ECO:0000318"/>
    <property type="project" value="GO_Central"/>
</dbReference>
<dbReference type="GO" id="GO:0008047">
    <property type="term" value="F:enzyme activator activity"/>
    <property type="evidence" value="ECO:0000318"/>
    <property type="project" value="GO_Central"/>
</dbReference>
<dbReference type="GO" id="GO:0003697">
    <property type="term" value="F:single-stranded DNA binding"/>
    <property type="evidence" value="ECO:0000318"/>
    <property type="project" value="GO_Central"/>
</dbReference>
<dbReference type="GO" id="GO:0006310">
    <property type="term" value="P:DNA recombination"/>
    <property type="evidence" value="ECO:0007669"/>
    <property type="project" value="UniProtKB-UniRule"/>
</dbReference>
<dbReference type="GO" id="GO:0006281">
    <property type="term" value="P:DNA repair"/>
    <property type="evidence" value="ECO:0007669"/>
    <property type="project" value="UniProtKB-UniRule"/>
</dbReference>
<dbReference type="GO" id="GO:0006260">
    <property type="term" value="P:DNA replication"/>
    <property type="evidence" value="ECO:0000318"/>
    <property type="project" value="GO_Central"/>
</dbReference>
<dbReference type="CDD" id="cd04496">
    <property type="entry name" value="SSB_OBF"/>
    <property type="match status" value="2"/>
</dbReference>
<dbReference type="Gene3D" id="2.40.50.140">
    <property type="entry name" value="Nucleic acid-binding proteins"/>
    <property type="match status" value="2"/>
</dbReference>
<dbReference type="HAMAP" id="MF_00984">
    <property type="entry name" value="SSB"/>
    <property type="match status" value="1"/>
</dbReference>
<dbReference type="InterPro" id="IPR012340">
    <property type="entry name" value="NA-bd_OB-fold"/>
</dbReference>
<dbReference type="InterPro" id="IPR000424">
    <property type="entry name" value="Primosome_PriB/ssb"/>
</dbReference>
<dbReference type="InterPro" id="IPR011344">
    <property type="entry name" value="ssDNA-bd"/>
</dbReference>
<dbReference type="NCBIfam" id="TIGR00621">
    <property type="entry name" value="ssb"/>
    <property type="match status" value="2"/>
</dbReference>
<dbReference type="PANTHER" id="PTHR10302">
    <property type="entry name" value="SINGLE-STRANDED DNA-BINDING PROTEIN"/>
    <property type="match status" value="1"/>
</dbReference>
<dbReference type="PANTHER" id="PTHR10302:SF27">
    <property type="entry name" value="SINGLE-STRANDED DNA-BINDING PROTEIN"/>
    <property type="match status" value="1"/>
</dbReference>
<dbReference type="Pfam" id="PF00436">
    <property type="entry name" value="SSB"/>
    <property type="match status" value="2"/>
</dbReference>
<dbReference type="SUPFAM" id="SSF50249">
    <property type="entry name" value="Nucleic acid-binding proteins"/>
    <property type="match status" value="2"/>
</dbReference>
<dbReference type="PROSITE" id="PS50935">
    <property type="entry name" value="SSB"/>
    <property type="match status" value="2"/>
</dbReference>
<proteinExistence type="evidence at protein level"/>